<feature type="chain" id="PRO_0000289305" description="UPF0297 protein llmg_0150">
    <location>
        <begin position="1"/>
        <end position="88"/>
    </location>
</feature>
<evidence type="ECO:0000255" key="1">
    <source>
        <dbReference type="HAMAP-Rule" id="MF_01507"/>
    </source>
</evidence>
<organism>
    <name type="scientific">Lactococcus lactis subsp. cremoris (strain MG1363)</name>
    <dbReference type="NCBI Taxonomy" id="416870"/>
    <lineage>
        <taxon>Bacteria</taxon>
        <taxon>Bacillati</taxon>
        <taxon>Bacillota</taxon>
        <taxon>Bacilli</taxon>
        <taxon>Lactobacillales</taxon>
        <taxon>Streptococcaceae</taxon>
        <taxon>Lactococcus</taxon>
        <taxon>Lactococcus cremoris subsp. cremoris</taxon>
    </lineage>
</organism>
<protein>
    <recommendedName>
        <fullName evidence="1">UPF0297 protein llmg_0150</fullName>
    </recommendedName>
</protein>
<proteinExistence type="inferred from homology"/>
<reference key="1">
    <citation type="journal article" date="2007" name="J. Bacteriol.">
        <title>The complete genome sequence of the lactic acid bacterial paradigm Lactococcus lactis subsp. cremoris MG1363.</title>
        <authorList>
            <person name="Wegmann U."/>
            <person name="O'Connell-Motherway M."/>
            <person name="Zomer A."/>
            <person name="Buist G."/>
            <person name="Shearman C."/>
            <person name="Canchaya C."/>
            <person name="Ventura M."/>
            <person name="Goesmann A."/>
            <person name="Gasson M.J."/>
            <person name="Kuipers O.P."/>
            <person name="van Sinderen D."/>
            <person name="Kok J."/>
        </authorList>
    </citation>
    <scope>NUCLEOTIDE SEQUENCE [LARGE SCALE GENOMIC DNA]</scope>
    <source>
        <strain>MG1363</strain>
    </source>
</reference>
<comment type="similarity">
    <text evidence="1">Belongs to the UPF0297 family.</text>
</comment>
<accession>A2RHM1</accession>
<sequence>MSFTDETVRFEFGDSDKKEIGETLVDVYNVLEAKGYNPINQIVGYVLSGDPAYIPRHDDARNKIRRFDRDDIVEELIKNYLKDNGVNL</sequence>
<gene>
    <name type="ordered locus">llmg_0150</name>
</gene>
<name>Y150_LACLM</name>
<dbReference type="EMBL" id="AM406671">
    <property type="protein sequence ID" value="CAL96757.1"/>
    <property type="molecule type" value="Genomic_DNA"/>
</dbReference>
<dbReference type="RefSeq" id="WP_003131820.1">
    <property type="nucleotide sequence ID" value="NZ_WJVF01000001.1"/>
</dbReference>
<dbReference type="SMR" id="A2RHM1"/>
<dbReference type="STRING" id="416870.llmg_0150"/>
<dbReference type="KEGG" id="llm:llmg_0150"/>
<dbReference type="eggNOG" id="COG4472">
    <property type="taxonomic scope" value="Bacteria"/>
</dbReference>
<dbReference type="HOGENOM" id="CLU_162466_0_0_9"/>
<dbReference type="OrthoDB" id="9796303at2"/>
<dbReference type="PhylomeDB" id="A2RHM1"/>
<dbReference type="Proteomes" id="UP000000364">
    <property type="component" value="Chromosome"/>
</dbReference>
<dbReference type="HAMAP" id="MF_01507">
    <property type="entry name" value="UPF0297"/>
    <property type="match status" value="1"/>
</dbReference>
<dbReference type="InterPro" id="IPR009309">
    <property type="entry name" value="IreB"/>
</dbReference>
<dbReference type="NCBIfam" id="NF003997">
    <property type="entry name" value="PRK05473.1"/>
    <property type="match status" value="1"/>
</dbReference>
<dbReference type="PANTHER" id="PTHR40067">
    <property type="entry name" value="UPF0297 PROTEIN YRZL"/>
    <property type="match status" value="1"/>
</dbReference>
<dbReference type="PANTHER" id="PTHR40067:SF1">
    <property type="entry name" value="UPF0297 PROTEIN YRZL"/>
    <property type="match status" value="1"/>
</dbReference>
<dbReference type="Pfam" id="PF06135">
    <property type="entry name" value="IreB"/>
    <property type="match status" value="1"/>
</dbReference>
<dbReference type="PIRSF" id="PIRSF037258">
    <property type="entry name" value="DUF965_bac"/>
    <property type="match status" value="1"/>
</dbReference>